<accession>A6U7A2</accession>
<reference key="1">
    <citation type="submission" date="2007-06" db="EMBL/GenBank/DDBJ databases">
        <title>Complete sequence of Sinorhizobium medicae WSM419 chromosome.</title>
        <authorList>
            <consortium name="US DOE Joint Genome Institute"/>
            <person name="Copeland A."/>
            <person name="Lucas S."/>
            <person name="Lapidus A."/>
            <person name="Barry K."/>
            <person name="Glavina del Rio T."/>
            <person name="Dalin E."/>
            <person name="Tice H."/>
            <person name="Pitluck S."/>
            <person name="Chain P."/>
            <person name="Malfatti S."/>
            <person name="Shin M."/>
            <person name="Vergez L."/>
            <person name="Schmutz J."/>
            <person name="Larimer F."/>
            <person name="Land M."/>
            <person name="Hauser L."/>
            <person name="Kyrpides N."/>
            <person name="Mikhailova N."/>
            <person name="Reeve W.G."/>
            <person name="Richardson P."/>
        </authorList>
    </citation>
    <scope>NUCLEOTIDE SEQUENCE [LARGE SCALE GENOMIC DNA]</scope>
    <source>
        <strain>WSM419</strain>
    </source>
</reference>
<keyword id="KW-0240">DNA-directed RNA polymerase</keyword>
<keyword id="KW-0548">Nucleotidyltransferase</keyword>
<keyword id="KW-0804">Transcription</keyword>
<keyword id="KW-0808">Transferase</keyword>
<name>RPOZ_SINMW</name>
<sequence>MARVTVEDCIDKVENRFELVLLASHRARLVSQGAPITVDRDNDKNPVVALREIADETLSPGDLKEDLIHSLQKHVEVDEPEPDPASLVQTEATPAFAEAAEEEDQPEALTFDRMSEEELLAGIEGLVPPEKSDDY</sequence>
<organism>
    <name type="scientific">Sinorhizobium medicae (strain WSM419)</name>
    <name type="common">Ensifer medicae</name>
    <dbReference type="NCBI Taxonomy" id="366394"/>
    <lineage>
        <taxon>Bacteria</taxon>
        <taxon>Pseudomonadati</taxon>
        <taxon>Pseudomonadota</taxon>
        <taxon>Alphaproteobacteria</taxon>
        <taxon>Hyphomicrobiales</taxon>
        <taxon>Rhizobiaceae</taxon>
        <taxon>Sinorhizobium/Ensifer group</taxon>
        <taxon>Sinorhizobium</taxon>
    </lineage>
</organism>
<feature type="chain" id="PRO_1000006019" description="DNA-directed RNA polymerase subunit omega">
    <location>
        <begin position="1"/>
        <end position="135"/>
    </location>
</feature>
<evidence type="ECO:0000255" key="1">
    <source>
        <dbReference type="HAMAP-Rule" id="MF_00366"/>
    </source>
</evidence>
<dbReference type="EC" id="2.7.7.6" evidence="1"/>
<dbReference type="EMBL" id="CP000738">
    <property type="protein sequence ID" value="ABR59532.1"/>
    <property type="molecule type" value="Genomic_DNA"/>
</dbReference>
<dbReference type="RefSeq" id="WP_011974878.1">
    <property type="nucleotide sequence ID" value="NC_009636.1"/>
</dbReference>
<dbReference type="RefSeq" id="YP_001326367.1">
    <property type="nucleotide sequence ID" value="NC_009636.1"/>
</dbReference>
<dbReference type="SMR" id="A6U7A2"/>
<dbReference type="STRING" id="366394.Smed_0676"/>
<dbReference type="GeneID" id="61609952"/>
<dbReference type="KEGG" id="smd:Smed_0676"/>
<dbReference type="PATRIC" id="fig|366394.8.peg.3778"/>
<dbReference type="eggNOG" id="COG1758">
    <property type="taxonomic scope" value="Bacteria"/>
</dbReference>
<dbReference type="HOGENOM" id="CLU_125406_2_0_5"/>
<dbReference type="OrthoDB" id="9796300at2"/>
<dbReference type="Proteomes" id="UP000001108">
    <property type="component" value="Chromosome"/>
</dbReference>
<dbReference type="GO" id="GO:0000428">
    <property type="term" value="C:DNA-directed RNA polymerase complex"/>
    <property type="evidence" value="ECO:0007669"/>
    <property type="project" value="UniProtKB-KW"/>
</dbReference>
<dbReference type="GO" id="GO:0003677">
    <property type="term" value="F:DNA binding"/>
    <property type="evidence" value="ECO:0007669"/>
    <property type="project" value="UniProtKB-UniRule"/>
</dbReference>
<dbReference type="GO" id="GO:0003899">
    <property type="term" value="F:DNA-directed RNA polymerase activity"/>
    <property type="evidence" value="ECO:0007669"/>
    <property type="project" value="UniProtKB-UniRule"/>
</dbReference>
<dbReference type="GO" id="GO:0006351">
    <property type="term" value="P:DNA-templated transcription"/>
    <property type="evidence" value="ECO:0007669"/>
    <property type="project" value="UniProtKB-UniRule"/>
</dbReference>
<dbReference type="Gene3D" id="3.90.940.10">
    <property type="match status" value="1"/>
</dbReference>
<dbReference type="HAMAP" id="MF_00366">
    <property type="entry name" value="RNApol_bact_RpoZ"/>
    <property type="match status" value="1"/>
</dbReference>
<dbReference type="InterPro" id="IPR003716">
    <property type="entry name" value="DNA-dir_RNA_pol_omega"/>
</dbReference>
<dbReference type="InterPro" id="IPR006110">
    <property type="entry name" value="Pol_omega/Rpo6/RPB6"/>
</dbReference>
<dbReference type="InterPro" id="IPR036161">
    <property type="entry name" value="RPB6/omega-like_sf"/>
</dbReference>
<dbReference type="NCBIfam" id="TIGR00690">
    <property type="entry name" value="rpoZ"/>
    <property type="match status" value="1"/>
</dbReference>
<dbReference type="PANTHER" id="PTHR34476">
    <property type="entry name" value="DNA-DIRECTED RNA POLYMERASE SUBUNIT OMEGA"/>
    <property type="match status" value="1"/>
</dbReference>
<dbReference type="PANTHER" id="PTHR34476:SF1">
    <property type="entry name" value="DNA-DIRECTED RNA POLYMERASE SUBUNIT OMEGA"/>
    <property type="match status" value="1"/>
</dbReference>
<dbReference type="Pfam" id="PF01192">
    <property type="entry name" value="RNA_pol_Rpb6"/>
    <property type="match status" value="1"/>
</dbReference>
<dbReference type="SMART" id="SM01409">
    <property type="entry name" value="RNA_pol_Rpb6"/>
    <property type="match status" value="1"/>
</dbReference>
<dbReference type="SUPFAM" id="SSF63562">
    <property type="entry name" value="RPB6/omega subunit-like"/>
    <property type="match status" value="1"/>
</dbReference>
<protein>
    <recommendedName>
        <fullName evidence="1">DNA-directed RNA polymerase subunit omega</fullName>
        <shortName evidence="1">RNAP omega subunit</shortName>
        <ecNumber evidence="1">2.7.7.6</ecNumber>
    </recommendedName>
    <alternativeName>
        <fullName evidence="1">RNA polymerase omega subunit</fullName>
    </alternativeName>
    <alternativeName>
        <fullName evidence="1">Transcriptase subunit omega</fullName>
    </alternativeName>
</protein>
<gene>
    <name evidence="1" type="primary">rpoZ</name>
    <name type="ordered locus">Smed_0676</name>
</gene>
<proteinExistence type="inferred from homology"/>
<comment type="function">
    <text evidence="1">Promotes RNA polymerase assembly. Latches the N- and C-terminal regions of the beta' subunit thereby facilitating its interaction with the beta and alpha subunits.</text>
</comment>
<comment type="catalytic activity">
    <reaction evidence="1">
        <text>RNA(n) + a ribonucleoside 5'-triphosphate = RNA(n+1) + diphosphate</text>
        <dbReference type="Rhea" id="RHEA:21248"/>
        <dbReference type="Rhea" id="RHEA-COMP:14527"/>
        <dbReference type="Rhea" id="RHEA-COMP:17342"/>
        <dbReference type="ChEBI" id="CHEBI:33019"/>
        <dbReference type="ChEBI" id="CHEBI:61557"/>
        <dbReference type="ChEBI" id="CHEBI:140395"/>
        <dbReference type="EC" id="2.7.7.6"/>
    </reaction>
</comment>
<comment type="subunit">
    <text evidence="1">The RNAP catalytic core consists of 2 alpha, 1 beta, 1 beta' and 1 omega subunit. When a sigma factor is associated with the core the holoenzyme is formed, which can initiate transcription.</text>
</comment>
<comment type="similarity">
    <text evidence="1">Belongs to the RNA polymerase subunit omega family.</text>
</comment>